<name>GLPE_ACTP7</name>
<keyword id="KW-0963">Cytoplasm</keyword>
<keyword id="KW-0808">Transferase</keyword>
<feature type="chain" id="PRO_1000190095" description="Thiosulfate sulfurtransferase GlpE">
    <location>
        <begin position="1"/>
        <end position="108"/>
    </location>
</feature>
<feature type="domain" description="Rhodanese" evidence="1">
    <location>
        <begin position="18"/>
        <end position="106"/>
    </location>
</feature>
<feature type="active site" description="Cysteine persulfide intermediate" evidence="1">
    <location>
        <position position="66"/>
    </location>
</feature>
<sequence>MSETFTEISPHQAWELIENEGATLADIRDGHRYAYSHPQDAFHLTNESYGRFLDEVDYEEPVIVMCYHGVSSRNTAQFLVEQGFDRVYSVKGGFDGWERSGLPIETAY</sequence>
<organism>
    <name type="scientific">Actinobacillus pleuropneumoniae serotype 7 (strain AP76)</name>
    <dbReference type="NCBI Taxonomy" id="537457"/>
    <lineage>
        <taxon>Bacteria</taxon>
        <taxon>Pseudomonadati</taxon>
        <taxon>Pseudomonadota</taxon>
        <taxon>Gammaproteobacteria</taxon>
        <taxon>Pasteurellales</taxon>
        <taxon>Pasteurellaceae</taxon>
        <taxon>Actinobacillus</taxon>
    </lineage>
</organism>
<evidence type="ECO:0000255" key="1">
    <source>
        <dbReference type="HAMAP-Rule" id="MF_01009"/>
    </source>
</evidence>
<dbReference type="EC" id="2.8.1.1" evidence="1"/>
<dbReference type="EMBL" id="CP001091">
    <property type="protein sequence ID" value="ACE60731.1"/>
    <property type="molecule type" value="Genomic_DNA"/>
</dbReference>
<dbReference type="RefSeq" id="WP_005606763.1">
    <property type="nucleotide sequence ID" value="NC_010939.1"/>
</dbReference>
<dbReference type="SMR" id="B3GZR9"/>
<dbReference type="KEGG" id="apa:APP7_0079"/>
<dbReference type="HOGENOM" id="CLU_089574_14_0_6"/>
<dbReference type="Proteomes" id="UP000001226">
    <property type="component" value="Chromosome"/>
</dbReference>
<dbReference type="GO" id="GO:0005737">
    <property type="term" value="C:cytoplasm"/>
    <property type="evidence" value="ECO:0007669"/>
    <property type="project" value="UniProtKB-SubCell"/>
</dbReference>
<dbReference type="GO" id="GO:0004792">
    <property type="term" value="F:thiosulfate-cyanide sulfurtransferase activity"/>
    <property type="evidence" value="ECO:0007669"/>
    <property type="project" value="UniProtKB-UniRule"/>
</dbReference>
<dbReference type="GO" id="GO:0006071">
    <property type="term" value="P:glycerol metabolic process"/>
    <property type="evidence" value="ECO:0007669"/>
    <property type="project" value="UniProtKB-UniRule"/>
</dbReference>
<dbReference type="CDD" id="cd01444">
    <property type="entry name" value="GlpE_ST"/>
    <property type="match status" value="1"/>
</dbReference>
<dbReference type="Gene3D" id="3.40.250.10">
    <property type="entry name" value="Rhodanese-like domain"/>
    <property type="match status" value="1"/>
</dbReference>
<dbReference type="HAMAP" id="MF_01009">
    <property type="entry name" value="Thiosulf_sulfurtr"/>
    <property type="match status" value="1"/>
</dbReference>
<dbReference type="InterPro" id="IPR050229">
    <property type="entry name" value="GlpE_sulfurtransferase"/>
</dbReference>
<dbReference type="InterPro" id="IPR001763">
    <property type="entry name" value="Rhodanese-like_dom"/>
</dbReference>
<dbReference type="InterPro" id="IPR036873">
    <property type="entry name" value="Rhodanese-like_dom_sf"/>
</dbReference>
<dbReference type="InterPro" id="IPR023695">
    <property type="entry name" value="Thiosulf_sulfurTrfase"/>
</dbReference>
<dbReference type="NCBIfam" id="NF001195">
    <property type="entry name" value="PRK00162.1"/>
    <property type="match status" value="1"/>
</dbReference>
<dbReference type="PANTHER" id="PTHR43031">
    <property type="entry name" value="FAD-DEPENDENT OXIDOREDUCTASE"/>
    <property type="match status" value="1"/>
</dbReference>
<dbReference type="PANTHER" id="PTHR43031:SF6">
    <property type="entry name" value="THIOSULFATE SULFURTRANSFERASE GLPE"/>
    <property type="match status" value="1"/>
</dbReference>
<dbReference type="Pfam" id="PF00581">
    <property type="entry name" value="Rhodanese"/>
    <property type="match status" value="1"/>
</dbReference>
<dbReference type="SMART" id="SM00450">
    <property type="entry name" value="RHOD"/>
    <property type="match status" value="1"/>
</dbReference>
<dbReference type="SUPFAM" id="SSF52821">
    <property type="entry name" value="Rhodanese/Cell cycle control phosphatase"/>
    <property type="match status" value="1"/>
</dbReference>
<dbReference type="PROSITE" id="PS50206">
    <property type="entry name" value="RHODANESE_3"/>
    <property type="match status" value="1"/>
</dbReference>
<reference key="1">
    <citation type="submission" date="2008-06" db="EMBL/GenBank/DDBJ databases">
        <title>Genome and proteome analysis of A. pleuropneumoniae serotype 7.</title>
        <authorList>
            <person name="Linke B."/>
            <person name="Buettner F."/>
            <person name="Martinez-Arias R."/>
            <person name="Goesmann A."/>
            <person name="Baltes N."/>
            <person name="Tegetmeyer H."/>
            <person name="Singh M."/>
            <person name="Gerlach G.F."/>
        </authorList>
    </citation>
    <scope>NUCLEOTIDE SEQUENCE [LARGE SCALE GENOMIC DNA]</scope>
    <source>
        <strain>AP76</strain>
    </source>
</reference>
<comment type="function">
    <text evidence="1">Transferase that catalyzes the transfer of sulfur from thiosulfate to thiophilic acceptors such as cyanide or dithiols. May function in a CysM-independent thiosulfate assimilation pathway by catalyzing the conversion of thiosulfate to sulfite, which can then be used for L-cysteine biosynthesis.</text>
</comment>
<comment type="catalytic activity">
    <reaction evidence="1">
        <text>thiosulfate + hydrogen cyanide = thiocyanate + sulfite + 2 H(+)</text>
        <dbReference type="Rhea" id="RHEA:16881"/>
        <dbReference type="ChEBI" id="CHEBI:15378"/>
        <dbReference type="ChEBI" id="CHEBI:17359"/>
        <dbReference type="ChEBI" id="CHEBI:18022"/>
        <dbReference type="ChEBI" id="CHEBI:18407"/>
        <dbReference type="ChEBI" id="CHEBI:33542"/>
        <dbReference type="EC" id="2.8.1.1"/>
    </reaction>
</comment>
<comment type="catalytic activity">
    <reaction evidence="1">
        <text>thiosulfate + [thioredoxin]-dithiol = [thioredoxin]-disulfide + hydrogen sulfide + sulfite + 2 H(+)</text>
        <dbReference type="Rhea" id="RHEA:83859"/>
        <dbReference type="Rhea" id="RHEA-COMP:10698"/>
        <dbReference type="Rhea" id="RHEA-COMP:10700"/>
        <dbReference type="ChEBI" id="CHEBI:15378"/>
        <dbReference type="ChEBI" id="CHEBI:17359"/>
        <dbReference type="ChEBI" id="CHEBI:29919"/>
        <dbReference type="ChEBI" id="CHEBI:29950"/>
        <dbReference type="ChEBI" id="CHEBI:33542"/>
        <dbReference type="ChEBI" id="CHEBI:50058"/>
    </reaction>
</comment>
<comment type="subcellular location">
    <subcellularLocation>
        <location evidence="1">Cytoplasm</location>
    </subcellularLocation>
</comment>
<comment type="similarity">
    <text evidence="1">Belongs to the GlpE family.</text>
</comment>
<proteinExistence type="inferred from homology"/>
<accession>B3GZR9</accession>
<gene>
    <name evidence="1" type="primary">glpE</name>
    <name type="ordered locus">APP7_0079</name>
</gene>
<protein>
    <recommendedName>
        <fullName evidence="1">Thiosulfate sulfurtransferase GlpE</fullName>
        <ecNumber evidence="1">2.8.1.1</ecNumber>
    </recommendedName>
</protein>